<name>REPLM_STAAU</name>
<reference key="1">
    <citation type="journal article" date="1987" name="J. Bacteriol.">
        <title>Replication properties of pIM13, a naturally occurring plasmid found in Bacillus subtilis, and of its close relative pE5, a plasmid native to Staphylococcus aureus.</title>
        <authorList>
            <person name="Projan S.J."/>
            <person name="Monod M."/>
            <person name="Narayanan C.S."/>
            <person name="Dubnau D."/>
        </authorList>
    </citation>
    <scope>NUCLEOTIDE SEQUENCE [GENOMIC DNA]</scope>
    <source>
        <plasmid>pE5</plasmid>
    </source>
</reference>
<reference key="2">
    <citation type="journal article" date="1988" name="J. Gen. Microbiol.">
        <title>The nucleotide sequence of Staphylococcus aureus plasmid pT48 conferring inducible macrolide-lincosamide-streptogramin B resistance and comparison with similar plasmids expressing constitutive resistance.</title>
        <authorList>
            <person name="Catchpole I."/>
            <person name="Thomas C."/>
            <person name="Davies A."/>
            <person name="Dyke K.G.H."/>
        </authorList>
    </citation>
    <scope>NUCLEOTIDE SEQUENCE [GENOMIC DNA]</scope>
    <source>
        <strain>T48</strain>
        <plasmid>pT48</plasmid>
    </source>
</reference>
<organism>
    <name type="scientific">Staphylococcus aureus</name>
    <dbReference type="NCBI Taxonomy" id="1280"/>
    <lineage>
        <taxon>Bacteria</taxon>
        <taxon>Bacillati</taxon>
        <taxon>Bacillota</taxon>
        <taxon>Bacilli</taxon>
        <taxon>Bacillales</taxon>
        <taxon>Staphylococcaceae</taxon>
        <taxon>Staphylococcus</taxon>
    </lineage>
</organism>
<geneLocation type="plasmid">
    <name>pE5</name>
</geneLocation>
<geneLocation type="plasmid">
    <name>pT48</name>
</geneLocation>
<sequence>MKERYGTVYKGSQRLIDEESGEVIEVDKLYRKQTSGNFVKAYIVQLISMLDMIGGKKLKIVNYILDNVHLSNNTMIATTREIAKATGTSLQTVITTLKILEEGNIIKRKTGVLMLNPELLMRGDDQKQKYLLLEFGNFEQEANEKQENALSDYYSFKD</sequence>
<keyword id="KW-0235">DNA replication</keyword>
<keyword id="KW-0614">Plasmid</keyword>
<proteinExistence type="predicted"/>
<protein>
    <recommendedName>
        <fullName>Replication and maintenance protein</fullName>
    </recommendedName>
    <alternativeName>
        <fullName>Plasmid replication protein</fullName>
    </alternativeName>
</protein>
<accession>P0A0C8</accession>
<accession>P13969</accession>
<gene>
    <name type="primary">repL</name>
    <name type="synonym">rep</name>
</gene>
<dbReference type="EMBL" id="M17990">
    <property type="protein sequence ID" value="AAA98227.1"/>
    <property type="molecule type" value="Genomic_DNA"/>
</dbReference>
<dbReference type="PIR" id="A29827">
    <property type="entry name" value="A29827"/>
</dbReference>
<dbReference type="RefSeq" id="NP_040474.1">
    <property type="nucleotide sequence ID" value="NC_001395.1"/>
</dbReference>
<dbReference type="RefSeq" id="WP_000664727.1">
    <property type="nucleotide sequence ID" value="NZ_WNWJ01000023.1"/>
</dbReference>
<dbReference type="RefSeq" id="YP_001901401.1">
    <property type="nucleotide sequence ID" value="NC_010685.1"/>
</dbReference>
<dbReference type="RefSeq" id="YP_001901403.1">
    <property type="nucleotide sequence ID" value="NC_010686.1"/>
</dbReference>
<dbReference type="RefSeq" id="YP_006937186.1">
    <property type="nucleotide sequence ID" value="NC_013291.1"/>
</dbReference>
<dbReference type="RefSeq" id="YP_006937475.1">
    <property type="nucleotide sequence ID" value="NC_013305.1"/>
</dbReference>
<dbReference type="RefSeq" id="YP_006958100.1">
    <property type="nucleotide sequence ID" value="NC_019139.1"/>
</dbReference>
<dbReference type="RefSeq" id="YP_006958111.1">
    <property type="nucleotide sequence ID" value="NC_019143.1"/>
</dbReference>
<dbReference type="RefSeq" id="YP_006958490.1">
    <property type="nucleotide sequence ID" value="NC_018969.1"/>
</dbReference>
<dbReference type="RefSeq" id="YP_009060502.1">
    <property type="nucleotide sequence ID" value="NC_024963.1"/>
</dbReference>
<dbReference type="RefSeq" id="YP_271814.1">
    <property type="nucleotide sequence ID" value="NC_007209.1"/>
</dbReference>
<dbReference type="SMR" id="P0A0C8"/>
<dbReference type="OrthoDB" id="2402632at2"/>
<dbReference type="GO" id="GO:0003677">
    <property type="term" value="F:DNA binding"/>
    <property type="evidence" value="ECO:0007669"/>
    <property type="project" value="InterPro"/>
</dbReference>
<dbReference type="GO" id="GO:0006260">
    <property type="term" value="P:DNA replication"/>
    <property type="evidence" value="ECO:0007669"/>
    <property type="project" value="UniProtKB-KW"/>
</dbReference>
<dbReference type="GO" id="GO:0006276">
    <property type="term" value="P:plasmid maintenance"/>
    <property type="evidence" value="ECO:0007669"/>
    <property type="project" value="InterPro"/>
</dbReference>
<dbReference type="GO" id="GO:0006355">
    <property type="term" value="P:regulation of DNA-templated transcription"/>
    <property type="evidence" value="ECO:0007669"/>
    <property type="project" value="InterPro"/>
</dbReference>
<dbReference type="CDD" id="cd00092">
    <property type="entry name" value="HTH_CRP"/>
    <property type="match status" value="1"/>
</dbReference>
<dbReference type="Gene3D" id="1.10.10.10">
    <property type="entry name" value="Winged helix-like DNA-binding domain superfamily/Winged helix DNA-binding domain"/>
    <property type="match status" value="1"/>
</dbReference>
<dbReference type="InterPro" id="IPR012318">
    <property type="entry name" value="HTH_CRP"/>
</dbReference>
<dbReference type="InterPro" id="IPR008813">
    <property type="entry name" value="Plasmid_replication_RepL"/>
</dbReference>
<dbReference type="InterPro" id="IPR036388">
    <property type="entry name" value="WH-like_DNA-bd_sf"/>
</dbReference>
<dbReference type="InterPro" id="IPR036390">
    <property type="entry name" value="WH_DNA-bd_sf"/>
</dbReference>
<dbReference type="Pfam" id="PF05732">
    <property type="entry name" value="RepL"/>
    <property type="match status" value="1"/>
</dbReference>
<dbReference type="SMART" id="SM00419">
    <property type="entry name" value="HTH_CRP"/>
    <property type="match status" value="1"/>
</dbReference>
<dbReference type="SUPFAM" id="SSF46785">
    <property type="entry name" value="Winged helix' DNA-binding domain"/>
    <property type="match status" value="1"/>
</dbReference>
<feature type="chain" id="PRO_0000068432" description="Replication and maintenance protein">
    <location>
        <begin position="1"/>
        <end position="158"/>
    </location>
</feature>